<name>PCDAD_HUMAN</name>
<dbReference type="EMBL" id="AF152309">
    <property type="protein sequence ID" value="AAD43703.1"/>
    <property type="molecule type" value="mRNA"/>
</dbReference>
<dbReference type="EMBL" id="AF152478">
    <property type="protein sequence ID" value="AAD43739.1"/>
    <property type="molecule type" value="mRNA"/>
</dbReference>
<dbReference type="EMBL" id="AC005609">
    <property type="protein sequence ID" value="AAC34314.1"/>
    <property type="molecule type" value="Genomic_DNA"/>
</dbReference>
<dbReference type="CCDS" id="CCDS4240.1">
    <molecule id="Q9Y5I0-1"/>
</dbReference>
<dbReference type="RefSeq" id="NP_061727.1">
    <molecule id="Q9Y5I0-1"/>
    <property type="nucleotide sequence ID" value="NM_018904.3"/>
</dbReference>
<dbReference type="RefSeq" id="NP_114071.1">
    <molecule id="Q9Y5I0-2"/>
    <property type="nucleotide sequence ID" value="NM_031865.2"/>
</dbReference>
<dbReference type="SMR" id="Q9Y5I0"/>
<dbReference type="BioGRID" id="121076">
    <property type="interactions" value="6"/>
</dbReference>
<dbReference type="FunCoup" id="Q9Y5I0">
    <property type="interactions" value="24"/>
</dbReference>
<dbReference type="IntAct" id="Q9Y5I0">
    <property type="interactions" value="4"/>
</dbReference>
<dbReference type="MINT" id="Q9Y5I0"/>
<dbReference type="STRING" id="9606.ENSP00000289272"/>
<dbReference type="GlyCosmos" id="Q9Y5I0">
    <property type="glycosylation" value="3 sites, No reported glycans"/>
</dbReference>
<dbReference type="GlyGen" id="Q9Y5I0">
    <property type="glycosylation" value="3 sites"/>
</dbReference>
<dbReference type="iPTMnet" id="Q9Y5I0"/>
<dbReference type="PhosphoSitePlus" id="Q9Y5I0"/>
<dbReference type="BioMuta" id="PCDHA13"/>
<dbReference type="DMDM" id="13878431"/>
<dbReference type="jPOST" id="Q9Y5I0"/>
<dbReference type="MassIVE" id="Q9Y5I0"/>
<dbReference type="PaxDb" id="9606-ENSP00000289272"/>
<dbReference type="PeptideAtlas" id="Q9Y5I0"/>
<dbReference type="Antibodypedia" id="76716">
    <property type="antibodies" value="22 antibodies from 11 providers"/>
</dbReference>
<dbReference type="DNASU" id="56136"/>
<dbReference type="Ensembl" id="ENST00000289272.3">
    <molecule id="Q9Y5I0-1"/>
    <property type="protein sequence ID" value="ENSP00000289272.2"/>
    <property type="gene ID" value="ENSG00000239389.8"/>
</dbReference>
<dbReference type="Ensembl" id="ENST00000617769.1">
    <molecule id="Q9Y5I0-2"/>
    <property type="protein sequence ID" value="ENSP00000479167.1"/>
    <property type="gene ID" value="ENSG00000239389.8"/>
</dbReference>
<dbReference type="Ensembl" id="ENST00000708325.1">
    <molecule id="Q9Y5I0-1"/>
    <property type="protein sequence ID" value="ENSP00000517171.1"/>
    <property type="gene ID" value="ENSG00000291666.1"/>
</dbReference>
<dbReference type="Ensembl" id="ENST00000708327.1">
    <molecule id="Q9Y5I0-2"/>
    <property type="protein sequence ID" value="ENSP00000517173.1"/>
    <property type="gene ID" value="ENSG00000291666.1"/>
</dbReference>
<dbReference type="GeneID" id="56136"/>
<dbReference type="KEGG" id="hsa:56136"/>
<dbReference type="MANE-Select" id="ENST00000289272.3">
    <property type="protein sequence ID" value="ENSP00000289272.2"/>
    <property type="RefSeq nucleotide sequence ID" value="NM_018904.3"/>
    <property type="RefSeq protein sequence ID" value="NP_061727.1"/>
</dbReference>
<dbReference type="UCSC" id="uc003lid.3">
    <molecule id="Q9Y5I0-1"/>
    <property type="organism name" value="human"/>
</dbReference>
<dbReference type="AGR" id="HGNC:8667"/>
<dbReference type="CTD" id="56136"/>
<dbReference type="DisGeNET" id="56136"/>
<dbReference type="GeneCards" id="PCDHA13"/>
<dbReference type="HGNC" id="HGNC:8667">
    <property type="gene designation" value="PCDHA13"/>
</dbReference>
<dbReference type="HPA" id="ENSG00000239389">
    <property type="expression patterns" value="Tissue enhanced (brain, parathyroid gland)"/>
</dbReference>
<dbReference type="MIM" id="604966">
    <property type="type" value="gene"/>
</dbReference>
<dbReference type="MIM" id="606319">
    <property type="type" value="gene"/>
</dbReference>
<dbReference type="neXtProt" id="NX_Q9Y5I0"/>
<dbReference type="OpenTargets" id="ENSG00000239389"/>
<dbReference type="PharmGKB" id="PA33013"/>
<dbReference type="VEuPathDB" id="HostDB:ENSG00000239389"/>
<dbReference type="eggNOG" id="KOG3594">
    <property type="taxonomic scope" value="Eukaryota"/>
</dbReference>
<dbReference type="GeneTree" id="ENSGT00940000165479"/>
<dbReference type="HOGENOM" id="CLU_006480_3_0_1"/>
<dbReference type="InParanoid" id="Q9Y5I0"/>
<dbReference type="OMA" id="YAFIINP"/>
<dbReference type="OrthoDB" id="6252479at2759"/>
<dbReference type="PAN-GO" id="Q9Y5I0">
    <property type="GO annotations" value="2 GO annotations based on evolutionary models"/>
</dbReference>
<dbReference type="PhylomeDB" id="Q9Y5I0"/>
<dbReference type="TreeFam" id="TF332299"/>
<dbReference type="PathwayCommons" id="Q9Y5I0"/>
<dbReference type="SignaLink" id="Q9Y5I0"/>
<dbReference type="SIGNOR" id="Q9Y5I0"/>
<dbReference type="BioGRID-ORCS" id="56136">
    <property type="hits" value="14 hits in 1097 CRISPR screens"/>
</dbReference>
<dbReference type="GenomeRNAi" id="56136"/>
<dbReference type="Pharos" id="Q9Y5I0">
    <property type="development level" value="Tdark"/>
</dbReference>
<dbReference type="PRO" id="PR:Q9Y5I0"/>
<dbReference type="Proteomes" id="UP000005640">
    <property type="component" value="Chromosome 5"/>
</dbReference>
<dbReference type="RNAct" id="Q9Y5I0">
    <property type="molecule type" value="protein"/>
</dbReference>
<dbReference type="Bgee" id="ENSG00000239389">
    <property type="expression patterns" value="Expressed in primordial germ cell in gonad and 59 other cell types or tissues"/>
</dbReference>
<dbReference type="ExpressionAtlas" id="Q9Y5I0">
    <property type="expression patterns" value="baseline and differential"/>
</dbReference>
<dbReference type="GO" id="GO:0005886">
    <property type="term" value="C:plasma membrane"/>
    <property type="evidence" value="ECO:0000318"/>
    <property type="project" value="GO_Central"/>
</dbReference>
<dbReference type="GO" id="GO:0005509">
    <property type="term" value="F:calcium ion binding"/>
    <property type="evidence" value="ECO:0007669"/>
    <property type="project" value="InterPro"/>
</dbReference>
<dbReference type="GO" id="GO:0007155">
    <property type="term" value="P:cell adhesion"/>
    <property type="evidence" value="ECO:0000318"/>
    <property type="project" value="GO_Central"/>
</dbReference>
<dbReference type="GO" id="GO:0007156">
    <property type="term" value="P:homophilic cell adhesion via plasma membrane adhesion molecules"/>
    <property type="evidence" value="ECO:0007669"/>
    <property type="project" value="InterPro"/>
</dbReference>
<dbReference type="GO" id="GO:0007399">
    <property type="term" value="P:nervous system development"/>
    <property type="evidence" value="ECO:0007669"/>
    <property type="project" value="UniProtKB-ARBA"/>
</dbReference>
<dbReference type="CDD" id="cd11304">
    <property type="entry name" value="Cadherin_repeat"/>
    <property type="match status" value="6"/>
</dbReference>
<dbReference type="FunFam" id="2.60.40.60:FF:000001">
    <property type="entry name" value="Protocadherin alpha 2"/>
    <property type="match status" value="1"/>
</dbReference>
<dbReference type="FunFam" id="2.60.40.60:FF:000002">
    <property type="entry name" value="Protocadherin alpha 2"/>
    <property type="match status" value="1"/>
</dbReference>
<dbReference type="FunFam" id="2.60.40.60:FF:000003">
    <property type="entry name" value="Protocadherin alpha 2"/>
    <property type="match status" value="1"/>
</dbReference>
<dbReference type="FunFam" id="2.60.40.60:FF:000006">
    <property type="entry name" value="Protocadherin alpha 2"/>
    <property type="match status" value="1"/>
</dbReference>
<dbReference type="FunFam" id="2.60.40.60:FF:000007">
    <property type="entry name" value="Protocadherin alpha 2"/>
    <property type="match status" value="1"/>
</dbReference>
<dbReference type="FunFam" id="2.60.40.60:FF:000076">
    <property type="entry name" value="Protocadherin alpha 2"/>
    <property type="match status" value="1"/>
</dbReference>
<dbReference type="Gene3D" id="2.60.40.60">
    <property type="entry name" value="Cadherins"/>
    <property type="match status" value="6"/>
</dbReference>
<dbReference type="InterPro" id="IPR002126">
    <property type="entry name" value="Cadherin-like_dom"/>
</dbReference>
<dbReference type="InterPro" id="IPR015919">
    <property type="entry name" value="Cadherin-like_sf"/>
</dbReference>
<dbReference type="InterPro" id="IPR031904">
    <property type="entry name" value="Cadherin_CBD"/>
</dbReference>
<dbReference type="InterPro" id="IPR020894">
    <property type="entry name" value="Cadherin_CS"/>
</dbReference>
<dbReference type="InterPro" id="IPR013164">
    <property type="entry name" value="Cadherin_N"/>
</dbReference>
<dbReference type="InterPro" id="IPR050174">
    <property type="entry name" value="Protocadherin/Cadherin-CA"/>
</dbReference>
<dbReference type="PANTHER" id="PTHR24028">
    <property type="entry name" value="CADHERIN-87A"/>
    <property type="match status" value="1"/>
</dbReference>
<dbReference type="PANTHER" id="PTHR24028:SF101">
    <property type="entry name" value="PROTOCADHERIN ALPHA-13"/>
    <property type="match status" value="1"/>
</dbReference>
<dbReference type="Pfam" id="PF00028">
    <property type="entry name" value="Cadherin"/>
    <property type="match status" value="5"/>
</dbReference>
<dbReference type="Pfam" id="PF08266">
    <property type="entry name" value="Cadherin_2"/>
    <property type="match status" value="1"/>
</dbReference>
<dbReference type="Pfam" id="PF15974">
    <property type="entry name" value="Cadherin_tail"/>
    <property type="match status" value="1"/>
</dbReference>
<dbReference type="PRINTS" id="PR00205">
    <property type="entry name" value="CADHERIN"/>
</dbReference>
<dbReference type="SMART" id="SM00112">
    <property type="entry name" value="CA"/>
    <property type="match status" value="6"/>
</dbReference>
<dbReference type="SUPFAM" id="SSF49313">
    <property type="entry name" value="Cadherin-like"/>
    <property type="match status" value="6"/>
</dbReference>
<dbReference type="PROSITE" id="PS00232">
    <property type="entry name" value="CADHERIN_1"/>
    <property type="match status" value="5"/>
</dbReference>
<dbReference type="PROSITE" id="PS50268">
    <property type="entry name" value="CADHERIN_2"/>
    <property type="match status" value="6"/>
</dbReference>
<protein>
    <recommendedName>
        <fullName>Protocadherin alpha-13</fullName>
        <shortName>PCDH-alpha-13</shortName>
    </recommendedName>
</protein>
<accession>Q9Y5I0</accession>
<accession>O75277</accession>
<reference key="1">
    <citation type="journal article" date="1999" name="Cell">
        <title>A striking organization of a large family of human neural cadherin-like cell adhesion genes.</title>
        <authorList>
            <person name="Wu Q."/>
            <person name="Maniatis T."/>
        </authorList>
    </citation>
    <scope>NUCLEOTIDE SEQUENCE [MRNA] (ISOFORMS 1 AND 2)</scope>
    <source>
        <tissue>Brain</tissue>
    </source>
</reference>
<reference key="2">
    <citation type="journal article" date="2004" name="Nature">
        <title>The DNA sequence and comparative analysis of human chromosome 5.</title>
        <authorList>
            <person name="Schmutz J."/>
            <person name="Martin J."/>
            <person name="Terry A."/>
            <person name="Couronne O."/>
            <person name="Grimwood J."/>
            <person name="Lowry S."/>
            <person name="Gordon L.A."/>
            <person name="Scott D."/>
            <person name="Xie G."/>
            <person name="Huang W."/>
            <person name="Hellsten U."/>
            <person name="Tran-Gyamfi M."/>
            <person name="She X."/>
            <person name="Prabhakar S."/>
            <person name="Aerts A."/>
            <person name="Altherr M."/>
            <person name="Bajorek E."/>
            <person name="Black S."/>
            <person name="Branscomb E."/>
            <person name="Caoile C."/>
            <person name="Challacombe J.F."/>
            <person name="Chan Y.M."/>
            <person name="Denys M."/>
            <person name="Detter J.C."/>
            <person name="Escobar J."/>
            <person name="Flowers D."/>
            <person name="Fotopulos D."/>
            <person name="Glavina T."/>
            <person name="Gomez M."/>
            <person name="Gonzales E."/>
            <person name="Goodstein D."/>
            <person name="Grigoriev I."/>
            <person name="Groza M."/>
            <person name="Hammon N."/>
            <person name="Hawkins T."/>
            <person name="Haydu L."/>
            <person name="Israni S."/>
            <person name="Jett J."/>
            <person name="Kadner K."/>
            <person name="Kimball H."/>
            <person name="Kobayashi A."/>
            <person name="Lopez F."/>
            <person name="Lou Y."/>
            <person name="Martinez D."/>
            <person name="Medina C."/>
            <person name="Morgan J."/>
            <person name="Nandkeshwar R."/>
            <person name="Noonan J.P."/>
            <person name="Pitluck S."/>
            <person name="Pollard M."/>
            <person name="Predki P."/>
            <person name="Priest J."/>
            <person name="Ramirez L."/>
            <person name="Retterer J."/>
            <person name="Rodriguez A."/>
            <person name="Rogers S."/>
            <person name="Salamov A."/>
            <person name="Salazar A."/>
            <person name="Thayer N."/>
            <person name="Tice H."/>
            <person name="Tsai M."/>
            <person name="Ustaszewska A."/>
            <person name="Vo N."/>
            <person name="Wheeler J."/>
            <person name="Wu K."/>
            <person name="Yang J."/>
            <person name="Dickson M."/>
            <person name="Cheng J.-F."/>
            <person name="Eichler E.E."/>
            <person name="Olsen A."/>
            <person name="Pennacchio L.A."/>
            <person name="Rokhsar D.S."/>
            <person name="Richardson P."/>
            <person name="Lucas S.M."/>
            <person name="Myers R.M."/>
            <person name="Rubin E.M."/>
        </authorList>
    </citation>
    <scope>NUCLEOTIDE SEQUENCE [LARGE SCALE GENOMIC DNA]</scope>
</reference>
<gene>
    <name type="primary">PCDHA13</name>
    <name type="synonym">CNRS5</name>
</gene>
<comment type="function">
    <text>Potential calcium-dependent cell-adhesion protein. May be involved in the establishment and maintenance of specific neuronal connections in the brain.</text>
</comment>
<comment type="subcellular location">
    <subcellularLocation>
        <location evidence="1">Cell membrane</location>
        <topology evidence="1">Single-pass type I membrane protein</topology>
    </subcellularLocation>
</comment>
<comment type="alternative products">
    <event type="alternative splicing"/>
    <isoform>
        <id>Q9Y5I0-1</id>
        <name>1</name>
        <sequence type="displayed"/>
    </isoform>
    <isoform>
        <id>Q9Y5I0-2</id>
        <name>2</name>
        <sequence type="described" ref="VSP_000697 VSP_000698"/>
    </isoform>
</comment>
<sequence length="950" mass="102483">MLSSWQGGPRPRQLLLWLLILAAWETGSGQLHYSVPEEAKHGTFVGRIAQDLGLELAELVPRLFRVASKRHGDLLEVNLQNGILFVNSRIDREELCGRSAECSIHLEVIVDRPLQVFHVEVKVRDINDNPPIFPESKKRIIIAESRPPETRFPLDGASDADIGVNSALTYRLDPNDYFTLDAQNSLEQMSSLSLVLRKTLDREEIQEHSLLLTASDGGKPELTGTVQLLITILDVNDNAPEFYQSVYKVTVLENAFNGTLVIKLNATDPDDGTNGDIVYSFRRPVWPAVVYAFTINPNNGEIRTKGKLDFEEKKLYEISVEAVDKGNIPMAGHCTLLVEVLDVNDNAPEVTITSLSLPIREDTQPSAIIALISVSDRDSGSNGQVTCTLTPHVPFKLVSTYKNYYSLVLDSALDRESVSAYELVVTARDGGSPSLWATASVSVGVADVNDNAPAFAQPEYTVFVKENNPPGCHIFTVSAQDADAQENALVSYSLVERRVGERALSSYVSVHAESGKVYALQPLDHEELELLQFQVSARDSGVPPLGSNVTLQVFVLDENDNAPALLTPGAGSAGGTVSELMPRSVGAGHVVAKVRAVDADSGYNAWLSYELQLAAVGARIPFRVGLYTGEISTTRPLDEVDAPHHRLLVLVKDHGEPALTATATVLLSLVESGQAPQASSRASAGAVGPEAALVDVNVYLIIAICAVSSLLVLTLLLYTALRCSAPPTEGACAPGKPTLVCSSAAGSWSYSQQRRPRVCSGEGPHKTDLMAFSPSLPPCLGSAEGTGQREEDSECLKEPRQPNPDWRYSASLRAGMHSSVHLEEAGILRAGPGGPDQQWPTVSSATPEPEAGEVSPPVGAGVNSNSWTFKYGPGNPKQSGPGELPDKFIIPGSPAIISIRQEPTNSQIDKSDFITFGKKEETKKKKKKKKGNKTQEKKEKGNSTTDNSDQ</sequence>
<proteinExistence type="evidence at protein level"/>
<keyword id="KW-0025">Alternative splicing</keyword>
<keyword id="KW-0106">Calcium</keyword>
<keyword id="KW-0130">Cell adhesion</keyword>
<keyword id="KW-1003">Cell membrane</keyword>
<keyword id="KW-0325">Glycoprotein</keyword>
<keyword id="KW-0472">Membrane</keyword>
<keyword id="KW-1267">Proteomics identification</keyword>
<keyword id="KW-1185">Reference proteome</keyword>
<keyword id="KW-0677">Repeat</keyword>
<keyword id="KW-0732">Signal</keyword>
<keyword id="KW-0812">Transmembrane</keyword>
<keyword id="KW-1133">Transmembrane helix</keyword>
<organism>
    <name type="scientific">Homo sapiens</name>
    <name type="common">Human</name>
    <dbReference type="NCBI Taxonomy" id="9606"/>
    <lineage>
        <taxon>Eukaryota</taxon>
        <taxon>Metazoa</taxon>
        <taxon>Chordata</taxon>
        <taxon>Craniata</taxon>
        <taxon>Vertebrata</taxon>
        <taxon>Euteleostomi</taxon>
        <taxon>Mammalia</taxon>
        <taxon>Eutheria</taxon>
        <taxon>Euarchontoglires</taxon>
        <taxon>Primates</taxon>
        <taxon>Haplorrhini</taxon>
        <taxon>Catarrhini</taxon>
        <taxon>Hominidae</taxon>
        <taxon>Homo</taxon>
    </lineage>
</organism>
<feature type="signal peptide" evidence="2">
    <location>
        <begin position="1"/>
        <end position="29"/>
    </location>
</feature>
<feature type="chain" id="PRO_0000003908" description="Protocadherin alpha-13">
    <location>
        <begin position="30"/>
        <end position="950"/>
    </location>
</feature>
<feature type="topological domain" description="Extracellular" evidence="2">
    <location>
        <begin position="30"/>
        <end position="697"/>
    </location>
</feature>
<feature type="transmembrane region" description="Helical" evidence="2">
    <location>
        <begin position="698"/>
        <end position="718"/>
    </location>
</feature>
<feature type="topological domain" description="Cytoplasmic" evidence="2">
    <location>
        <begin position="719"/>
        <end position="950"/>
    </location>
</feature>
<feature type="domain" description="Cadherin 1" evidence="3">
    <location>
        <begin position="34"/>
        <end position="133"/>
    </location>
</feature>
<feature type="domain" description="Cadherin 2" evidence="3">
    <location>
        <begin position="134"/>
        <end position="242"/>
    </location>
</feature>
<feature type="domain" description="Cadherin 3" evidence="3">
    <location>
        <begin position="243"/>
        <end position="350"/>
    </location>
</feature>
<feature type="domain" description="Cadherin 4" evidence="3">
    <location>
        <begin position="351"/>
        <end position="455"/>
    </location>
</feature>
<feature type="domain" description="Cadherin 5" evidence="3">
    <location>
        <begin position="456"/>
        <end position="565"/>
    </location>
</feature>
<feature type="domain" description="Cadherin 6" evidence="3">
    <location>
        <begin position="581"/>
        <end position="678"/>
    </location>
</feature>
<feature type="repeat" description="PXXP 1">
    <location>
        <begin position="734"/>
        <end position="737"/>
    </location>
</feature>
<feature type="repeat" description="PXXP 2">
    <location>
        <begin position="774"/>
        <end position="777"/>
    </location>
</feature>
<feature type="repeat" description="PXXP 3">
    <location>
        <begin position="799"/>
        <end position="802"/>
    </location>
</feature>
<feature type="repeat" description="PXXP 4">
    <location>
        <begin position="832"/>
        <end position="835"/>
    </location>
</feature>
<feature type="repeat" description="PXXP 5">
    <location>
        <begin position="873"/>
        <end position="876"/>
    </location>
</feature>
<feature type="repeat" description="PXXP 6">
    <location>
        <begin position="891"/>
        <end position="894"/>
    </location>
</feature>
<feature type="region of interest" description="6 X 4 AA repeats of P-X-X-P">
    <location>
        <begin position="734"/>
        <end position="894"/>
    </location>
</feature>
<feature type="region of interest" description="Disordered" evidence="4">
    <location>
        <begin position="780"/>
        <end position="806"/>
    </location>
</feature>
<feature type="region of interest" description="Disordered" evidence="4">
    <location>
        <begin position="829"/>
        <end position="950"/>
    </location>
</feature>
<feature type="compositionally biased region" description="Basic and acidic residues" evidence="4">
    <location>
        <begin position="787"/>
        <end position="800"/>
    </location>
</feature>
<feature type="compositionally biased region" description="Basic and acidic residues" evidence="4">
    <location>
        <begin position="909"/>
        <end position="923"/>
    </location>
</feature>
<feature type="glycosylation site" description="N-linked (GlcNAc...) asparagine" evidence="2">
    <location>
        <position position="257"/>
    </location>
</feature>
<feature type="glycosylation site" description="N-linked (GlcNAc...) asparagine" evidence="2">
    <location>
        <position position="265"/>
    </location>
</feature>
<feature type="glycosylation site" description="N-linked (GlcNAc...) asparagine" evidence="2">
    <location>
        <position position="548"/>
    </location>
</feature>
<feature type="splice variant" id="VSP_000697" description="In isoform 2." evidence="5">
    <original>PRQPNPDWR</original>
    <variation>VSLYFKKLS</variation>
    <location>
        <begin position="799"/>
        <end position="807"/>
    </location>
</feature>
<feature type="splice variant" id="VSP_000698" description="In isoform 2." evidence="5">
    <location>
        <begin position="808"/>
        <end position="950"/>
    </location>
</feature>
<evidence type="ECO:0000250" key="1"/>
<evidence type="ECO:0000255" key="2"/>
<evidence type="ECO:0000255" key="3">
    <source>
        <dbReference type="PROSITE-ProRule" id="PRU00043"/>
    </source>
</evidence>
<evidence type="ECO:0000256" key="4">
    <source>
        <dbReference type="SAM" id="MobiDB-lite"/>
    </source>
</evidence>
<evidence type="ECO:0000303" key="5">
    <source>
    </source>
</evidence>